<gene>
    <name type="primary">yihF</name>
    <name type="ordered locus">b3861</name>
    <name type="ordered locus">JW5574</name>
</gene>
<keyword id="KW-1185">Reference proteome</keyword>
<keyword id="KW-0732">Signal</keyword>
<accession>P32128</accession>
<accession>Q2M8F9</accession>
<accession>Q47164</accession>
<evidence type="ECO:0000255" key="1"/>
<evidence type="ECO:0000305" key="2"/>
<organism>
    <name type="scientific">Escherichia coli (strain K12)</name>
    <dbReference type="NCBI Taxonomy" id="83333"/>
    <lineage>
        <taxon>Bacteria</taxon>
        <taxon>Pseudomonadati</taxon>
        <taxon>Pseudomonadota</taxon>
        <taxon>Gammaproteobacteria</taxon>
        <taxon>Enterobacterales</taxon>
        <taxon>Enterobacteriaceae</taxon>
        <taxon>Escherichia</taxon>
    </lineage>
</organism>
<name>YIHF_ECOLI</name>
<dbReference type="EMBL" id="X80762">
    <property type="protein sequence ID" value="CAA56737.1"/>
    <property type="molecule type" value="Genomic_DNA"/>
</dbReference>
<dbReference type="EMBL" id="L19201">
    <property type="protein sequence ID" value="AAB02996.1"/>
    <property type="status" value="ALT_INIT"/>
    <property type="molecule type" value="Genomic_DNA"/>
</dbReference>
<dbReference type="EMBL" id="U00096">
    <property type="protein sequence ID" value="AAC76859.2"/>
    <property type="molecule type" value="Genomic_DNA"/>
</dbReference>
<dbReference type="EMBL" id="AP009048">
    <property type="protein sequence ID" value="BAE77447.1"/>
    <property type="status" value="ALT_INIT"/>
    <property type="molecule type" value="Genomic_DNA"/>
</dbReference>
<dbReference type="PIR" id="A65191">
    <property type="entry name" value="A65191"/>
</dbReference>
<dbReference type="RefSeq" id="NP_418298.4">
    <property type="nucleotide sequence ID" value="NC_000913.3"/>
</dbReference>
<dbReference type="RefSeq" id="WP_001333507.1">
    <property type="nucleotide sequence ID" value="NZ_SSZK01000026.1"/>
</dbReference>
<dbReference type="BioGRID" id="4261203">
    <property type="interactions" value="185"/>
</dbReference>
<dbReference type="FunCoup" id="P32128">
    <property type="interactions" value="49"/>
</dbReference>
<dbReference type="STRING" id="511145.b3861"/>
<dbReference type="PaxDb" id="511145-b3861"/>
<dbReference type="EnsemblBacteria" id="AAC76859">
    <property type="protein sequence ID" value="AAC76859"/>
    <property type="gene ID" value="b3861"/>
</dbReference>
<dbReference type="GeneID" id="948352"/>
<dbReference type="KEGG" id="ecj:JW5574"/>
<dbReference type="KEGG" id="eco:b3861"/>
<dbReference type="KEGG" id="ecoc:C3026_20870"/>
<dbReference type="PATRIC" id="fig|511145.12.peg.3970"/>
<dbReference type="EchoBASE" id="EB1779"/>
<dbReference type="eggNOG" id="COG5339">
    <property type="taxonomic scope" value="Bacteria"/>
</dbReference>
<dbReference type="HOGENOM" id="CLU_029683_2_0_6"/>
<dbReference type="InParanoid" id="P32128"/>
<dbReference type="OMA" id="FNSHFQM"/>
<dbReference type="OrthoDB" id="5444681at2"/>
<dbReference type="PhylomeDB" id="P32128"/>
<dbReference type="BioCyc" id="EcoCyc:EG11832-MONOMER"/>
<dbReference type="PRO" id="PR:P32128"/>
<dbReference type="Proteomes" id="UP000000625">
    <property type="component" value="Chromosome"/>
</dbReference>
<dbReference type="InterPro" id="IPR010352">
    <property type="entry name" value="DUF945"/>
</dbReference>
<dbReference type="NCBIfam" id="NF008472">
    <property type="entry name" value="PRK11367.1"/>
    <property type="match status" value="1"/>
</dbReference>
<dbReference type="Pfam" id="PF06097">
    <property type="entry name" value="DUF945"/>
    <property type="match status" value="1"/>
</dbReference>
<proteinExistence type="inferred from homology"/>
<reference key="1">
    <citation type="journal article" date="1994" name="Microbiology">
        <title>The Escherichia coli dsbA gene is partly transcribed from the promoter of a weakly expressed upstream gene.</title>
        <authorList>
            <person name="Belin P."/>
            <person name="Boquet P.L."/>
        </authorList>
    </citation>
    <scope>NUCLEOTIDE SEQUENCE [GENOMIC DNA]</scope>
    <source>
        <strain>K12</strain>
    </source>
</reference>
<reference key="2">
    <citation type="journal article" date="1993" name="Nucleic Acids Res.">
        <title>Analysis of the Escherichia coli genome. III. DNA sequence of the region from 87.2 to 89.2 minutes.</title>
        <authorList>
            <person name="Plunkett G. III"/>
            <person name="Burland V."/>
            <person name="Daniels D.L."/>
            <person name="Blattner F.R."/>
        </authorList>
    </citation>
    <scope>NUCLEOTIDE SEQUENCE [LARGE SCALE GENOMIC DNA]</scope>
    <source>
        <strain>K12 / MG1655 / ATCC 47076</strain>
    </source>
</reference>
<reference key="3">
    <citation type="journal article" date="1997" name="Science">
        <title>The complete genome sequence of Escherichia coli K-12.</title>
        <authorList>
            <person name="Blattner F.R."/>
            <person name="Plunkett G. III"/>
            <person name="Bloch C.A."/>
            <person name="Perna N.T."/>
            <person name="Burland V."/>
            <person name="Riley M."/>
            <person name="Collado-Vides J."/>
            <person name="Glasner J.D."/>
            <person name="Rode C.K."/>
            <person name="Mayhew G.F."/>
            <person name="Gregor J."/>
            <person name="Davis N.W."/>
            <person name="Kirkpatrick H.A."/>
            <person name="Goeden M.A."/>
            <person name="Rose D.J."/>
            <person name="Mau B."/>
            <person name="Shao Y."/>
        </authorList>
    </citation>
    <scope>NUCLEOTIDE SEQUENCE [LARGE SCALE GENOMIC DNA]</scope>
    <scope>SEQUENCE REVISION TO 300 AND 316</scope>
    <source>
        <strain>K12 / MG1655 / ATCC 47076</strain>
    </source>
</reference>
<reference key="4">
    <citation type="journal article" date="2006" name="Mol. Syst. Biol.">
        <title>Highly accurate genome sequences of Escherichia coli K-12 strains MG1655 and W3110.</title>
        <authorList>
            <person name="Hayashi K."/>
            <person name="Morooka N."/>
            <person name="Yamamoto Y."/>
            <person name="Fujita K."/>
            <person name="Isono K."/>
            <person name="Choi S."/>
            <person name="Ohtsubo E."/>
            <person name="Baba T."/>
            <person name="Wanner B.L."/>
            <person name="Mori H."/>
            <person name="Horiuchi T."/>
        </authorList>
    </citation>
    <scope>NUCLEOTIDE SEQUENCE [LARGE SCALE GENOMIC DNA]</scope>
    <source>
        <strain>K12 / W3110 / ATCC 27325 / DSM 5911</strain>
    </source>
</reference>
<protein>
    <recommendedName>
        <fullName>Uncharacterized protein YihF</fullName>
    </recommendedName>
</protein>
<sequence length="476" mass="52637">MIRKSATGVIVALAVIWGGGTWYTGTQIQPGVEKFIKDFNDAKKKGEHAYDMTLSYQNFDKGFFNSRFQMQMTFDNGAPDLNIKPGQKVVFDVDVEHGPLPITMLMHGNVIPALAAAKVNLVNNELTQPLFIAAKNKSPVEATLRFAFGGSFSTTLDVAPAEYGKFSFGEGQFTFNGDGSSLSNLDIEGKVEDIVLQLSPMNKVTAKSFTIDSLARLEEKKFPVGESESKFNQINIINHGEDVAQIDAFVAKTRLDRVKDKDYINVNLTYELDKLTKGNQQLGSGEWSLIAESIDPSAVRQFIIQYNIAMQKQLAAHPELANDEVALQEVNAALFKEYLPLLQKSEPTIKQPVRWKNALGELNANLDISIADPAKSSSSTNKDIKSLNFDVKLPLNVVTETAKQLNLSEGMDAEKAQKQADKQISGMMTLGQMFQLITIDNNTASLQLRYTPGKVVFNGQEMSEEEFMSRAGRFVH</sequence>
<comment type="similarity">
    <text evidence="2">To E.coli YdgA and H.influenzae HI_1236.</text>
</comment>
<comment type="sequence caution" evidence="2">
    <conflict type="erroneous initiation">
        <sequence resource="EMBL-CDS" id="AAB02996"/>
    </conflict>
</comment>
<comment type="sequence caution" evidence="2">
    <conflict type="erroneous initiation">
        <sequence resource="EMBL-CDS" id="BAE77447"/>
    </conflict>
</comment>
<feature type="signal peptide" evidence="1">
    <location>
        <begin position="1"/>
        <end position="24"/>
    </location>
</feature>
<feature type="chain" id="PRO_0000169674" description="Uncharacterized protein YihF">
    <location>
        <begin position="25"/>
        <end position="476"/>
    </location>
</feature>
<feature type="sequence conflict" description="In Ref. 1; CAA56737." evidence="2" ref="1">
    <original>E</original>
    <variation>Q</variation>
    <location>
        <position position="226"/>
    </location>
</feature>
<feature type="sequence conflict" description="In Ref. 2; AAB02996." evidence="2" ref="2">
    <original>R</original>
    <variation>A</variation>
    <location>
        <position position="300"/>
    </location>
</feature>
<feature type="sequence conflict" description="In Ref. 2; AAB02996." evidence="2" ref="2">
    <original>A</original>
    <variation>M</variation>
    <location>
        <position position="316"/>
    </location>
</feature>
<feature type="sequence conflict" description="In Ref. 1; CAA56737." evidence="2" ref="1">
    <original>T</original>
    <variation>N</variation>
    <location>
        <position position="443"/>
    </location>
</feature>